<dbReference type="EC" id="2.3.1.191" evidence="1"/>
<dbReference type="EMBL" id="AM236080">
    <property type="protein sequence ID" value="CAK07721.1"/>
    <property type="molecule type" value="Genomic_DNA"/>
</dbReference>
<dbReference type="RefSeq" id="WP_011651821.1">
    <property type="nucleotide sequence ID" value="NC_008380.1"/>
</dbReference>
<dbReference type="SMR" id="Q1MH46"/>
<dbReference type="EnsemblBacteria" id="CAK07721">
    <property type="protein sequence ID" value="CAK07721"/>
    <property type="gene ID" value="RL2229"/>
</dbReference>
<dbReference type="KEGG" id="rle:RL2229"/>
<dbReference type="eggNOG" id="COG1044">
    <property type="taxonomic scope" value="Bacteria"/>
</dbReference>
<dbReference type="HOGENOM" id="CLU_049865_0_2_5"/>
<dbReference type="UniPathway" id="UPA00973"/>
<dbReference type="Proteomes" id="UP000006575">
    <property type="component" value="Chromosome"/>
</dbReference>
<dbReference type="GO" id="GO:0016020">
    <property type="term" value="C:membrane"/>
    <property type="evidence" value="ECO:0007669"/>
    <property type="project" value="GOC"/>
</dbReference>
<dbReference type="GO" id="GO:0016410">
    <property type="term" value="F:N-acyltransferase activity"/>
    <property type="evidence" value="ECO:0007669"/>
    <property type="project" value="InterPro"/>
</dbReference>
<dbReference type="GO" id="GO:0009245">
    <property type="term" value="P:lipid A biosynthetic process"/>
    <property type="evidence" value="ECO:0007669"/>
    <property type="project" value="UniProtKB-UniRule"/>
</dbReference>
<dbReference type="CDD" id="cd03352">
    <property type="entry name" value="LbH_LpxD"/>
    <property type="match status" value="1"/>
</dbReference>
<dbReference type="Gene3D" id="2.160.10.10">
    <property type="entry name" value="Hexapeptide repeat proteins"/>
    <property type="match status" value="1"/>
</dbReference>
<dbReference type="Gene3D" id="3.40.1390.10">
    <property type="entry name" value="MurE/MurF, N-terminal domain"/>
    <property type="match status" value="1"/>
</dbReference>
<dbReference type="HAMAP" id="MF_00523">
    <property type="entry name" value="LpxD"/>
    <property type="match status" value="1"/>
</dbReference>
<dbReference type="InterPro" id="IPR001451">
    <property type="entry name" value="Hexapep"/>
</dbReference>
<dbReference type="InterPro" id="IPR018357">
    <property type="entry name" value="Hexapep_transf_CS"/>
</dbReference>
<dbReference type="InterPro" id="IPR007691">
    <property type="entry name" value="LpxD"/>
</dbReference>
<dbReference type="InterPro" id="IPR011004">
    <property type="entry name" value="Trimer_LpxA-like_sf"/>
</dbReference>
<dbReference type="InterPro" id="IPR020573">
    <property type="entry name" value="UDP_GlcNAc_AcTrfase_non-rep"/>
</dbReference>
<dbReference type="NCBIfam" id="TIGR01853">
    <property type="entry name" value="lipid_A_lpxD"/>
    <property type="match status" value="1"/>
</dbReference>
<dbReference type="NCBIfam" id="NF002060">
    <property type="entry name" value="PRK00892.1"/>
    <property type="match status" value="1"/>
</dbReference>
<dbReference type="PANTHER" id="PTHR43378">
    <property type="entry name" value="UDP-3-O-ACYLGLUCOSAMINE N-ACYLTRANSFERASE"/>
    <property type="match status" value="1"/>
</dbReference>
<dbReference type="PANTHER" id="PTHR43378:SF2">
    <property type="entry name" value="UDP-3-O-ACYLGLUCOSAMINE N-ACYLTRANSFERASE 1, MITOCHONDRIAL-RELATED"/>
    <property type="match status" value="1"/>
</dbReference>
<dbReference type="Pfam" id="PF00132">
    <property type="entry name" value="Hexapep"/>
    <property type="match status" value="3"/>
</dbReference>
<dbReference type="Pfam" id="PF04613">
    <property type="entry name" value="LpxD"/>
    <property type="match status" value="1"/>
</dbReference>
<dbReference type="SUPFAM" id="SSF51161">
    <property type="entry name" value="Trimeric LpxA-like enzymes"/>
    <property type="match status" value="1"/>
</dbReference>
<dbReference type="PROSITE" id="PS00101">
    <property type="entry name" value="HEXAPEP_TRANSFERASES"/>
    <property type="match status" value="2"/>
</dbReference>
<reference key="1">
    <citation type="journal article" date="2006" name="Genome Biol.">
        <title>The genome of Rhizobium leguminosarum has recognizable core and accessory components.</title>
        <authorList>
            <person name="Young J.P.W."/>
            <person name="Crossman L.C."/>
            <person name="Johnston A.W.B."/>
            <person name="Thomson N.R."/>
            <person name="Ghazoui Z.F."/>
            <person name="Hull K.H."/>
            <person name="Wexler M."/>
            <person name="Curson A.R.J."/>
            <person name="Todd J.D."/>
            <person name="Poole P.S."/>
            <person name="Mauchline T.H."/>
            <person name="East A.K."/>
            <person name="Quail M.A."/>
            <person name="Churcher C."/>
            <person name="Arrowsmith C."/>
            <person name="Cherevach I."/>
            <person name="Chillingworth T."/>
            <person name="Clarke K."/>
            <person name="Cronin A."/>
            <person name="Davis P."/>
            <person name="Fraser A."/>
            <person name="Hance Z."/>
            <person name="Hauser H."/>
            <person name="Jagels K."/>
            <person name="Moule S."/>
            <person name="Mungall K."/>
            <person name="Norbertczak H."/>
            <person name="Rabbinowitsch E."/>
            <person name="Sanders M."/>
            <person name="Simmonds M."/>
            <person name="Whitehead S."/>
            <person name="Parkhill J."/>
        </authorList>
    </citation>
    <scope>NUCLEOTIDE SEQUENCE [LARGE SCALE GENOMIC DNA]</scope>
    <source>
        <strain>DSM 114642 / LMG 32736 / 3841</strain>
    </source>
</reference>
<name>LPXD_RHIJ3</name>
<keyword id="KW-0012">Acyltransferase</keyword>
<keyword id="KW-0441">Lipid A biosynthesis</keyword>
<keyword id="KW-0444">Lipid biosynthesis</keyword>
<keyword id="KW-0443">Lipid metabolism</keyword>
<keyword id="KW-0677">Repeat</keyword>
<keyword id="KW-0808">Transferase</keyword>
<organism>
    <name type="scientific">Rhizobium johnstonii (strain DSM 114642 / LMG 32736 / 3841)</name>
    <name type="common">Rhizobium leguminosarum bv. viciae</name>
    <dbReference type="NCBI Taxonomy" id="216596"/>
    <lineage>
        <taxon>Bacteria</taxon>
        <taxon>Pseudomonadati</taxon>
        <taxon>Pseudomonadota</taxon>
        <taxon>Alphaproteobacteria</taxon>
        <taxon>Hyphomicrobiales</taxon>
        <taxon>Rhizobiaceae</taxon>
        <taxon>Rhizobium/Agrobacterium group</taxon>
        <taxon>Rhizobium</taxon>
        <taxon>Rhizobium johnstonii</taxon>
    </lineage>
</organism>
<feature type="chain" id="PRO_0000264422" description="UDP-3-O-acylglucosamine N-acyltransferase">
    <location>
        <begin position="1"/>
        <end position="354"/>
    </location>
</feature>
<feature type="active site" description="Proton acceptor" evidence="1">
    <location>
        <position position="257"/>
    </location>
</feature>
<sequence length="354" mass="36657">MEQNVFFLPHEGLKLAELAEFLGAELVNSDYADVIVRSVAPISRARAGDVCYILSRRSRDELATCEASAVICDKALADLVPQHLPVMLSSNPHAAFAMAGGLFYPAALRPVAFSGESEIAPSAVIDPSARLEKGVIVEPMAVIGAHAEIGEGTRIGAHSIIGPNVKIGRDCSIAAGASIICALLGNGVIIHNGARIGQDGFGYAPGPRGMIKIVQIGRVIIQDNVEIGANTTIDRGAMDDTVIGEGTKIDNQVQIGHNVQIGRHCAIVALVGIAGSAKIGNGVQIGGQVGIKGHVTIGDGVQIAAQSGIMTDLAAGGQYGGTPGRPLNDYLRDVAQQMSKTKLRGKKPGGEQND</sequence>
<protein>
    <recommendedName>
        <fullName evidence="1">UDP-3-O-acylglucosamine N-acyltransferase</fullName>
        <ecNumber evidence="1">2.3.1.191</ecNumber>
    </recommendedName>
</protein>
<comment type="function">
    <text evidence="1">Catalyzes the N-acylation of UDP-3-O-acylglucosamine using 3-hydroxyacyl-ACP as the acyl donor. Is involved in the biosynthesis of lipid A, a phosphorylated glycolipid that anchors the lipopolysaccharide to the outer membrane of the cell.</text>
</comment>
<comment type="catalytic activity">
    <reaction evidence="1">
        <text>a UDP-3-O-[(3R)-3-hydroxyacyl]-alpha-D-glucosamine + a (3R)-hydroxyacyl-[ACP] = a UDP-2-N,3-O-bis[(3R)-3-hydroxyacyl]-alpha-D-glucosamine + holo-[ACP] + H(+)</text>
        <dbReference type="Rhea" id="RHEA:53836"/>
        <dbReference type="Rhea" id="RHEA-COMP:9685"/>
        <dbReference type="Rhea" id="RHEA-COMP:9945"/>
        <dbReference type="ChEBI" id="CHEBI:15378"/>
        <dbReference type="ChEBI" id="CHEBI:64479"/>
        <dbReference type="ChEBI" id="CHEBI:78827"/>
        <dbReference type="ChEBI" id="CHEBI:137740"/>
        <dbReference type="ChEBI" id="CHEBI:137748"/>
        <dbReference type="EC" id="2.3.1.191"/>
    </reaction>
</comment>
<comment type="pathway">
    <text evidence="1">Bacterial outer membrane biogenesis; LPS lipid A biosynthesis.</text>
</comment>
<comment type="subunit">
    <text evidence="1">Homotrimer.</text>
</comment>
<comment type="similarity">
    <text evidence="1">Belongs to the transferase hexapeptide repeat family. LpxD subfamily.</text>
</comment>
<evidence type="ECO:0000255" key="1">
    <source>
        <dbReference type="HAMAP-Rule" id="MF_00523"/>
    </source>
</evidence>
<proteinExistence type="inferred from homology"/>
<accession>Q1MH46</accession>
<gene>
    <name evidence="1" type="primary">lpxD</name>
    <name type="ordered locus">RL2229</name>
</gene>